<name>Y2028_MYCBO</name>
<reference key="1">
    <citation type="journal article" date="2003" name="Proc. Natl. Acad. Sci. U.S.A.">
        <title>The complete genome sequence of Mycobacterium bovis.</title>
        <authorList>
            <person name="Garnier T."/>
            <person name="Eiglmeier K."/>
            <person name="Camus J.-C."/>
            <person name="Medina N."/>
            <person name="Mansoor H."/>
            <person name="Pryor M."/>
            <person name="Duthoy S."/>
            <person name="Grondin S."/>
            <person name="Lacroix C."/>
            <person name="Monsempe C."/>
            <person name="Simon S."/>
            <person name="Harris B."/>
            <person name="Atkin R."/>
            <person name="Doggett J."/>
            <person name="Mayes R."/>
            <person name="Keating L."/>
            <person name="Wheeler P.R."/>
            <person name="Parkhill J."/>
            <person name="Barrell B.G."/>
            <person name="Cole S.T."/>
            <person name="Gordon S.V."/>
            <person name="Hewinson R.G."/>
        </authorList>
    </citation>
    <scope>NUCLEOTIDE SEQUENCE [LARGE SCALE GENOMIC DNA]</scope>
    <source>
        <strain>ATCC BAA-935 / AF2122/97</strain>
    </source>
</reference>
<reference key="2">
    <citation type="journal article" date="2017" name="Genome Announc.">
        <title>Updated reference genome sequence and annotation of Mycobacterium bovis AF2122/97.</title>
        <authorList>
            <person name="Malone K.M."/>
            <person name="Farrell D."/>
            <person name="Stuber T.P."/>
            <person name="Schubert O.T."/>
            <person name="Aebersold R."/>
            <person name="Robbe-Austerman S."/>
            <person name="Gordon S.V."/>
        </authorList>
    </citation>
    <scope>NUCLEOTIDE SEQUENCE [LARGE SCALE GENOMIC DNA]</scope>
    <scope>GENOME REANNOTATION</scope>
    <source>
        <strain>ATCC BAA-935 / AF2122/97</strain>
    </source>
</reference>
<dbReference type="EMBL" id="LT708304">
    <property type="protein sequence ID" value="SIU00635.1"/>
    <property type="molecule type" value="Genomic_DNA"/>
</dbReference>
<dbReference type="RefSeq" id="NP_855678.1">
    <property type="nucleotide sequence ID" value="NC_002945.3"/>
</dbReference>
<dbReference type="RefSeq" id="WP_003410060.1">
    <property type="nucleotide sequence ID" value="NC_002945.4"/>
</dbReference>
<dbReference type="SMR" id="P64922"/>
<dbReference type="KEGG" id="mbo:BQ2027_MB2028C"/>
<dbReference type="PATRIC" id="fig|233413.5.peg.2228"/>
<dbReference type="Proteomes" id="UP000001419">
    <property type="component" value="Chromosome"/>
</dbReference>
<dbReference type="GO" id="GO:0005524">
    <property type="term" value="F:ATP binding"/>
    <property type="evidence" value="ECO:0007669"/>
    <property type="project" value="UniProtKB-KW"/>
</dbReference>
<dbReference type="CDD" id="cd23944">
    <property type="entry name" value="USP_Rv2623_repeat1"/>
    <property type="match status" value="1"/>
</dbReference>
<dbReference type="FunFam" id="3.40.50.620:FF:000123">
    <property type="entry name" value="Universal stress protein family"/>
    <property type="match status" value="2"/>
</dbReference>
<dbReference type="Gene3D" id="3.40.50.620">
    <property type="entry name" value="HUPs"/>
    <property type="match status" value="2"/>
</dbReference>
<dbReference type="InterPro" id="IPR014729">
    <property type="entry name" value="Rossmann-like_a/b/a_fold"/>
</dbReference>
<dbReference type="InterPro" id="IPR006015">
    <property type="entry name" value="Universal_stress_UspA"/>
</dbReference>
<dbReference type="InterPro" id="IPR006016">
    <property type="entry name" value="UspA"/>
</dbReference>
<dbReference type="PANTHER" id="PTHR46268">
    <property type="entry name" value="STRESS RESPONSE PROTEIN NHAX"/>
    <property type="match status" value="1"/>
</dbReference>
<dbReference type="PANTHER" id="PTHR46268:SF27">
    <property type="entry name" value="UNIVERSAL STRESS PROTEIN RV2623"/>
    <property type="match status" value="1"/>
</dbReference>
<dbReference type="Pfam" id="PF00582">
    <property type="entry name" value="Usp"/>
    <property type="match status" value="2"/>
</dbReference>
<dbReference type="PRINTS" id="PR01438">
    <property type="entry name" value="UNVRSLSTRESS"/>
</dbReference>
<dbReference type="SUPFAM" id="SSF52402">
    <property type="entry name" value="Adenine nucleotide alpha hydrolases-like"/>
    <property type="match status" value="2"/>
</dbReference>
<evidence type="ECO:0000250" key="1">
    <source>
        <dbReference type="UniProtKB" id="P9WFD7"/>
    </source>
</evidence>
<evidence type="ECO:0000305" key="2"/>
<keyword id="KW-0067">ATP-binding</keyword>
<keyword id="KW-0547">Nucleotide-binding</keyword>
<keyword id="KW-1185">Reference proteome</keyword>
<gene>
    <name type="ordered locus">BQ2027_MB2028C</name>
</gene>
<comment type="similarity">
    <text evidence="2">Belongs to the universal stress protein A family.</text>
</comment>
<organism>
    <name type="scientific">Mycobacterium bovis (strain ATCC BAA-935 / AF2122/97)</name>
    <dbReference type="NCBI Taxonomy" id="233413"/>
    <lineage>
        <taxon>Bacteria</taxon>
        <taxon>Bacillati</taxon>
        <taxon>Actinomycetota</taxon>
        <taxon>Actinomycetes</taxon>
        <taxon>Mycobacteriales</taxon>
        <taxon>Mycobacteriaceae</taxon>
        <taxon>Mycobacterium</taxon>
        <taxon>Mycobacterium tuberculosis complex</taxon>
    </lineage>
</organism>
<proteinExistence type="inferred from homology"/>
<sequence>MSKPRKQHGVVVGVDGSLESDAAACWGATDAAMRNIPLTVVHVVNADVATWPPMPYPETWGVWQEDEGRQIVANAVKLAKEAVGADRKLSVKSELVFSTPVPTMVEISNEAEMVVLGSSGRGALARGLLGSVSSSLVRRAGCPVAVIHSDDAVIPDPQHAPVLVGIDGSPVSELATAVAFDEASRRGVELIAVHAWSDVEVVELPGLDFSAVQQEAELSLAERLAGWQERYPDVPVSRVVVCDRPARKLVQKSASAQLVVVGSHGRGGLTGMLLGSVSNAVLHAARVPVIVARQS</sequence>
<protein>
    <recommendedName>
        <fullName>Universal stress protein Mb2028c</fullName>
        <shortName>USP Mb2028c</shortName>
    </recommendedName>
</protein>
<accession>P64922</accession>
<accession>A0A1R3Y0Q0</accession>
<accession>Q10851</accession>
<accession>X2BJU8</accession>
<feature type="chain" id="PRO_0000103935" description="Universal stress protein Mb2028c">
    <location>
        <begin position="1"/>
        <end position="295"/>
    </location>
</feature>
<feature type="binding site" evidence="1">
    <location>
        <position position="13"/>
    </location>
    <ligand>
        <name>ATP</name>
        <dbReference type="ChEBI" id="CHEBI:30616"/>
        <label>1</label>
    </ligand>
</feature>
<feature type="binding site" evidence="1">
    <location>
        <begin position="117"/>
        <end position="123"/>
    </location>
    <ligand>
        <name>ATP</name>
        <dbReference type="ChEBI" id="CHEBI:30616"/>
        <label>1</label>
    </ligand>
</feature>
<feature type="binding site" evidence="1">
    <location>
        <begin position="131"/>
        <end position="132"/>
    </location>
    <ligand>
        <name>ATP</name>
        <dbReference type="ChEBI" id="CHEBI:30616"/>
        <label>1</label>
    </ligand>
</feature>
<feature type="binding site" evidence="1">
    <location>
        <position position="165"/>
    </location>
    <ligand>
        <name>ATP</name>
        <dbReference type="ChEBI" id="CHEBI:30616"/>
        <label>2</label>
    </ligand>
</feature>
<feature type="binding site" evidence="1">
    <location>
        <position position="198"/>
    </location>
    <ligand>
        <name>ATP</name>
        <dbReference type="ChEBI" id="CHEBI:30616"/>
        <label>2</label>
    </ligand>
</feature>
<feature type="binding site" evidence="1">
    <location>
        <begin position="262"/>
        <end position="268"/>
    </location>
    <ligand>
        <name>ATP</name>
        <dbReference type="ChEBI" id="CHEBI:30616"/>
        <label>2</label>
    </ligand>
</feature>
<feature type="binding site" evidence="1">
    <location>
        <begin position="276"/>
        <end position="278"/>
    </location>
    <ligand>
        <name>ATP</name>
        <dbReference type="ChEBI" id="CHEBI:30616"/>
        <label>2</label>
    </ligand>
</feature>